<sequence>MTDCRLAGSPTKRSPSLVKATTDGVVLEPSAFSIILGTLPSIIATAELVVPKSIPITASGILVDWKRVRIRSILCALKAFHDGNMLLEFKFLIMTSEIVTNALR</sequence>
<protein>
    <recommendedName>
        <fullName>Putative uncharacterized protein YEL030C-A</fullName>
    </recommendedName>
</protein>
<accession>Q8TGR5</accession>
<proteinExistence type="uncertain"/>
<gene>
    <name type="ordered locus">YEL030C-A</name>
</gene>
<dbReference type="EMBL" id="U18530">
    <property type="status" value="NOT_ANNOTATED_CDS"/>
    <property type="molecule type" value="Genomic_DNA"/>
</dbReference>
<dbReference type="EMBL" id="AF479920">
    <property type="protein sequence ID" value="AAL79233.1"/>
    <property type="molecule type" value="Genomic_DNA"/>
</dbReference>
<dbReference type="PaxDb" id="4932-YEL030C-A"/>
<dbReference type="EnsemblFungi" id="YEL030C-A_mRNA">
    <property type="protein sequence ID" value="YEL030C-A"/>
    <property type="gene ID" value="YEL030C-A"/>
</dbReference>
<dbReference type="AGR" id="SGD:S000028619"/>
<dbReference type="SGD" id="S000028619">
    <property type="gene designation" value="YEL030C-A"/>
</dbReference>
<dbReference type="eggNOG" id="ENOG502SDS4">
    <property type="taxonomic scope" value="Eukaryota"/>
</dbReference>
<dbReference type="HOGENOM" id="CLU_2251602_0_0_1"/>
<name>YE030_YEAST</name>
<organism>
    <name type="scientific">Saccharomyces cerevisiae (strain ATCC 204508 / S288c)</name>
    <name type="common">Baker's yeast</name>
    <dbReference type="NCBI Taxonomy" id="559292"/>
    <lineage>
        <taxon>Eukaryota</taxon>
        <taxon>Fungi</taxon>
        <taxon>Dikarya</taxon>
        <taxon>Ascomycota</taxon>
        <taxon>Saccharomycotina</taxon>
        <taxon>Saccharomycetes</taxon>
        <taxon>Saccharomycetales</taxon>
        <taxon>Saccharomycetaceae</taxon>
        <taxon>Saccharomyces</taxon>
    </lineage>
</organism>
<evidence type="ECO:0000305" key="1"/>
<evidence type="ECO:0000305" key="2">
    <source>
    </source>
</evidence>
<comment type="miscellaneous">
    <text evidence="1">Partially overlaps ECM10.</text>
</comment>
<comment type="caution">
    <text evidence="2">Product of a dubious gene prediction unlikely to encode a functional protein. Because of that it is not part of the S.cerevisiae S288c complete/reference proteome set.</text>
</comment>
<reference key="1">
    <citation type="journal article" date="1997" name="Nature">
        <title>The nucleotide sequence of Saccharomyces cerevisiae chromosome V.</title>
        <authorList>
            <person name="Dietrich F.S."/>
            <person name="Mulligan J.T."/>
            <person name="Hennessy K.M."/>
            <person name="Yelton M.A."/>
            <person name="Allen E."/>
            <person name="Araujo R."/>
            <person name="Aviles E."/>
            <person name="Berno A."/>
            <person name="Brennan T."/>
            <person name="Carpenter J."/>
            <person name="Chen E."/>
            <person name="Cherry J.M."/>
            <person name="Chung E."/>
            <person name="Duncan M."/>
            <person name="Guzman E."/>
            <person name="Hartzell G."/>
            <person name="Hunicke-Smith S."/>
            <person name="Hyman R.W."/>
            <person name="Kayser A."/>
            <person name="Komp C."/>
            <person name="Lashkari D."/>
            <person name="Lew H."/>
            <person name="Lin D."/>
            <person name="Mosedale D."/>
            <person name="Nakahara K."/>
            <person name="Namath A."/>
            <person name="Norgren R."/>
            <person name="Oefner P."/>
            <person name="Oh C."/>
            <person name="Petel F.X."/>
            <person name="Roberts D."/>
            <person name="Sehl P."/>
            <person name="Schramm S."/>
            <person name="Shogren T."/>
            <person name="Smith V."/>
            <person name="Taylor P."/>
            <person name="Wei Y."/>
            <person name="Botstein D."/>
            <person name="Davis R.W."/>
        </authorList>
    </citation>
    <scope>NUCLEOTIDE SEQUENCE [LARGE SCALE GENOMIC DNA]</scope>
    <source>
        <strain>ATCC 204508 / S288c</strain>
    </source>
</reference>
<reference key="2">
    <citation type="journal article" date="2014" name="G3 (Bethesda)">
        <title>The reference genome sequence of Saccharomyces cerevisiae: Then and now.</title>
        <authorList>
            <person name="Engel S.R."/>
            <person name="Dietrich F.S."/>
            <person name="Fisk D.G."/>
            <person name="Binkley G."/>
            <person name="Balakrishnan R."/>
            <person name="Costanzo M.C."/>
            <person name="Dwight S.S."/>
            <person name="Hitz B.C."/>
            <person name="Karra K."/>
            <person name="Nash R.S."/>
            <person name="Weng S."/>
            <person name="Wong E.D."/>
            <person name="Lloyd P."/>
            <person name="Skrzypek M.S."/>
            <person name="Miyasato S.R."/>
            <person name="Simison M."/>
            <person name="Cherry J.M."/>
        </authorList>
    </citation>
    <scope>GENOME REANNOTATION</scope>
    <source>
        <strain>ATCC 204508 / S288c</strain>
    </source>
</reference>
<reference key="3">
    <citation type="journal article" date="2002" name="Nat. Biotechnol.">
        <title>An integrated approach for finding overlooked genes in yeast.</title>
        <authorList>
            <person name="Kumar A."/>
            <person name="Harrison P.M."/>
            <person name="Cheung K.-H."/>
            <person name="Lan N."/>
            <person name="Echols N."/>
            <person name="Bertone P."/>
            <person name="Miller P."/>
            <person name="Gerstein M.B."/>
            <person name="Snyder M."/>
        </authorList>
    </citation>
    <scope>NUCLEOTIDE SEQUENCE [GENOMIC DNA]</scope>
</reference>
<feature type="chain" id="PRO_0000299909" description="Putative uncharacterized protein YEL030C-A">
    <location>
        <begin position="1"/>
        <end position="104"/>
    </location>
</feature>